<gene>
    <name evidence="1" type="primary">tatB</name>
    <name type="ordered locus">Mvan_4493</name>
</gene>
<reference key="1">
    <citation type="submission" date="2006-12" db="EMBL/GenBank/DDBJ databases">
        <title>Complete sequence of Mycobacterium vanbaalenii PYR-1.</title>
        <authorList>
            <consortium name="US DOE Joint Genome Institute"/>
            <person name="Copeland A."/>
            <person name="Lucas S."/>
            <person name="Lapidus A."/>
            <person name="Barry K."/>
            <person name="Detter J.C."/>
            <person name="Glavina del Rio T."/>
            <person name="Hammon N."/>
            <person name="Israni S."/>
            <person name="Dalin E."/>
            <person name="Tice H."/>
            <person name="Pitluck S."/>
            <person name="Singan V."/>
            <person name="Schmutz J."/>
            <person name="Larimer F."/>
            <person name="Land M."/>
            <person name="Hauser L."/>
            <person name="Kyrpides N."/>
            <person name="Anderson I.J."/>
            <person name="Miller C."/>
            <person name="Richardson P."/>
        </authorList>
    </citation>
    <scope>NUCLEOTIDE SEQUENCE [LARGE SCALE GENOMIC DNA]</scope>
    <source>
        <strain>DSM 7251 / JCM 13017 / BCRC 16820 / KCTC 9966 / NRRL B-24157 / PYR-1</strain>
    </source>
</reference>
<feature type="chain" id="PRO_0000301194" description="Sec-independent protein translocase protein TatB">
    <location>
        <begin position="1"/>
        <end position="142"/>
    </location>
</feature>
<feature type="transmembrane region" description="Helical" evidence="1">
    <location>
        <begin position="2"/>
        <end position="22"/>
    </location>
</feature>
<feature type="region of interest" description="Disordered" evidence="2">
    <location>
        <begin position="89"/>
        <end position="142"/>
    </location>
</feature>
<feature type="compositionally biased region" description="Basic and acidic residues" evidence="2">
    <location>
        <begin position="99"/>
        <end position="112"/>
    </location>
</feature>
<feature type="compositionally biased region" description="Polar residues" evidence="2">
    <location>
        <begin position="133"/>
        <end position="142"/>
    </location>
</feature>
<keyword id="KW-1003">Cell membrane</keyword>
<keyword id="KW-0472">Membrane</keyword>
<keyword id="KW-0653">Protein transport</keyword>
<keyword id="KW-0811">Translocation</keyword>
<keyword id="KW-0812">Transmembrane</keyword>
<keyword id="KW-1133">Transmembrane helix</keyword>
<keyword id="KW-0813">Transport</keyword>
<protein>
    <recommendedName>
        <fullName evidence="1">Sec-independent protein translocase protein TatB</fullName>
    </recommendedName>
</protein>
<comment type="function">
    <text evidence="1">Part of the twin-arginine translocation (Tat) system that transports large folded proteins containing a characteristic twin-arginine motif in their signal peptide across membranes. Together with TatC, TatB is part of a receptor directly interacting with Tat signal peptides. TatB may form an oligomeric binding site that transiently accommodates folded Tat precursor proteins before their translocation.</text>
</comment>
<comment type="subunit">
    <text evidence="1">The Tat system comprises two distinct complexes: a TatABC complex, containing multiple copies of TatA, TatB and TatC subunits, and a separate TatA complex, containing only TatA subunits. Substrates initially bind to the TatABC complex, which probably triggers association of the separate TatA complex to form the active translocon.</text>
</comment>
<comment type="subcellular location">
    <subcellularLocation>
        <location evidence="1">Cell membrane</location>
        <topology evidence="1">Single-pass membrane protein</topology>
    </subcellularLocation>
</comment>
<comment type="similarity">
    <text evidence="1">Belongs to the TatB family.</text>
</comment>
<accession>A1TDL8</accession>
<sequence>MFANVGWGEMLVLVIAGLVILGPERLPGAIRWTAGAVRQARDYVTGATSQLREELGTDFDDLREPLSELQRLRGMTPRAALTKHLLDGDDSIFTGKFDQNGKSEKPEQKPEKPQSAPGPAAAVPDQPAGGRSGSTPYDTDAT</sequence>
<organism>
    <name type="scientific">Mycolicibacterium vanbaalenii (strain DSM 7251 / JCM 13017 / BCRC 16820 / KCTC 9966 / NRRL B-24157 / PYR-1)</name>
    <name type="common">Mycobacterium vanbaalenii</name>
    <dbReference type="NCBI Taxonomy" id="350058"/>
    <lineage>
        <taxon>Bacteria</taxon>
        <taxon>Bacillati</taxon>
        <taxon>Actinomycetota</taxon>
        <taxon>Actinomycetes</taxon>
        <taxon>Mycobacteriales</taxon>
        <taxon>Mycobacteriaceae</taxon>
        <taxon>Mycolicibacterium</taxon>
    </lineage>
</organism>
<evidence type="ECO:0000255" key="1">
    <source>
        <dbReference type="HAMAP-Rule" id="MF_00237"/>
    </source>
</evidence>
<evidence type="ECO:0000256" key="2">
    <source>
        <dbReference type="SAM" id="MobiDB-lite"/>
    </source>
</evidence>
<proteinExistence type="inferred from homology"/>
<name>TATB_MYCVP</name>
<dbReference type="EMBL" id="CP000511">
    <property type="protein sequence ID" value="ABM15268.1"/>
    <property type="molecule type" value="Genomic_DNA"/>
</dbReference>
<dbReference type="RefSeq" id="WP_011781646.1">
    <property type="nucleotide sequence ID" value="NC_008726.1"/>
</dbReference>
<dbReference type="SMR" id="A1TDL8"/>
<dbReference type="STRING" id="350058.Mvan_4493"/>
<dbReference type="KEGG" id="mva:Mvan_4493"/>
<dbReference type="eggNOG" id="COG1826">
    <property type="taxonomic scope" value="Bacteria"/>
</dbReference>
<dbReference type="HOGENOM" id="CLU_086034_2_0_11"/>
<dbReference type="Proteomes" id="UP000009159">
    <property type="component" value="Chromosome"/>
</dbReference>
<dbReference type="GO" id="GO:0033281">
    <property type="term" value="C:TAT protein transport complex"/>
    <property type="evidence" value="ECO:0007669"/>
    <property type="project" value="UniProtKB-UniRule"/>
</dbReference>
<dbReference type="GO" id="GO:0008320">
    <property type="term" value="F:protein transmembrane transporter activity"/>
    <property type="evidence" value="ECO:0007669"/>
    <property type="project" value="UniProtKB-UniRule"/>
</dbReference>
<dbReference type="GO" id="GO:0043953">
    <property type="term" value="P:protein transport by the Tat complex"/>
    <property type="evidence" value="ECO:0007669"/>
    <property type="project" value="UniProtKB-UniRule"/>
</dbReference>
<dbReference type="Gene3D" id="1.20.5.3310">
    <property type="match status" value="1"/>
</dbReference>
<dbReference type="HAMAP" id="MF_00237">
    <property type="entry name" value="TatB"/>
    <property type="match status" value="1"/>
</dbReference>
<dbReference type="InterPro" id="IPR018448">
    <property type="entry name" value="TatB"/>
</dbReference>
<dbReference type="NCBIfam" id="TIGR01410">
    <property type="entry name" value="tatB"/>
    <property type="match status" value="1"/>
</dbReference>
<dbReference type="PRINTS" id="PR01506">
    <property type="entry name" value="TATBPROTEIN"/>
</dbReference>